<feature type="chain" id="PRO_0000097850" description="Probable cyclic pyranopterin monophosphate synthase">
    <location>
        <begin position="1"/>
        <end position="146"/>
    </location>
</feature>
<feature type="active site" evidence="1">
    <location>
        <position position="117"/>
    </location>
</feature>
<feature type="binding site" evidence="1">
    <location>
        <begin position="66"/>
        <end position="68"/>
    </location>
    <ligand>
        <name>substrate</name>
    </ligand>
</feature>
<feature type="binding site" evidence="1">
    <location>
        <begin position="102"/>
        <end position="103"/>
    </location>
    <ligand>
        <name>substrate</name>
    </ligand>
</feature>
<protein>
    <recommendedName>
        <fullName evidence="1">Probable cyclic pyranopterin monophosphate synthase</fullName>
        <ecNumber evidence="1">4.6.1.17</ecNumber>
    </recommendedName>
    <alternativeName>
        <fullName evidence="1">Molybdenum cofactor biosynthesis protein C</fullName>
    </alternativeName>
</protein>
<proteinExistence type="inferred from homology"/>
<name>MOAC_AERPE</name>
<organism>
    <name type="scientific">Aeropyrum pernix (strain ATCC 700893 / DSM 11879 / JCM 9820 / NBRC 100138 / K1)</name>
    <dbReference type="NCBI Taxonomy" id="272557"/>
    <lineage>
        <taxon>Archaea</taxon>
        <taxon>Thermoproteota</taxon>
        <taxon>Thermoprotei</taxon>
        <taxon>Desulfurococcales</taxon>
        <taxon>Desulfurococcaceae</taxon>
        <taxon>Aeropyrum</taxon>
    </lineage>
</organism>
<keyword id="KW-0456">Lyase</keyword>
<keyword id="KW-0501">Molybdenum cofactor biosynthesis</keyword>
<keyword id="KW-1185">Reference proteome</keyword>
<evidence type="ECO:0000255" key="1">
    <source>
        <dbReference type="HAMAP-Rule" id="MF_01224"/>
    </source>
</evidence>
<comment type="function">
    <text evidence="1">Catalyzes the conversion of (8S)-3',8-cyclo-7,8-dihydroguanosine 5'-triphosphate to cyclic pyranopterin monophosphate (cPMP).</text>
</comment>
<comment type="catalytic activity">
    <reaction evidence="1">
        <text>(8S)-3',8-cyclo-7,8-dihydroguanosine 5'-triphosphate = cyclic pyranopterin phosphate + diphosphate</text>
        <dbReference type="Rhea" id="RHEA:49580"/>
        <dbReference type="ChEBI" id="CHEBI:33019"/>
        <dbReference type="ChEBI" id="CHEBI:59648"/>
        <dbReference type="ChEBI" id="CHEBI:131766"/>
        <dbReference type="EC" id="4.6.1.17"/>
    </reaction>
</comment>
<comment type="pathway">
    <text evidence="1">Cofactor biosynthesis; molybdopterin biosynthesis.</text>
</comment>
<comment type="subunit">
    <text evidence="1">Homohexamer; trimer of dimers.</text>
</comment>
<comment type="similarity">
    <text evidence="1">Belongs to the MoaC family.</text>
</comment>
<gene>
    <name evidence="1" type="primary">moaC</name>
    <name type="ordered locus">APE_1350.1</name>
</gene>
<dbReference type="EC" id="4.6.1.17" evidence="1"/>
<dbReference type="EMBL" id="BA000002">
    <property type="protein sequence ID" value="BAA80344.2"/>
    <property type="molecule type" value="Genomic_DNA"/>
</dbReference>
<dbReference type="PIR" id="B72611">
    <property type="entry name" value="B72611"/>
</dbReference>
<dbReference type="RefSeq" id="WP_010866318.1">
    <property type="nucleotide sequence ID" value="NC_000854.2"/>
</dbReference>
<dbReference type="SMR" id="Q9YCA4"/>
<dbReference type="STRING" id="272557.APE_1350.1"/>
<dbReference type="EnsemblBacteria" id="BAA80344">
    <property type="protein sequence ID" value="BAA80344"/>
    <property type="gene ID" value="APE_1350.1"/>
</dbReference>
<dbReference type="GeneID" id="1445956"/>
<dbReference type="KEGG" id="ape:APE_1350.1"/>
<dbReference type="PATRIC" id="fig|272557.25.peg.921"/>
<dbReference type="eggNOG" id="arCOG01530">
    <property type="taxonomic scope" value="Archaea"/>
</dbReference>
<dbReference type="UniPathway" id="UPA00344"/>
<dbReference type="Proteomes" id="UP000002518">
    <property type="component" value="Chromosome"/>
</dbReference>
<dbReference type="GO" id="GO:0061799">
    <property type="term" value="F:cyclic pyranopterin monophosphate synthase activity"/>
    <property type="evidence" value="ECO:0007669"/>
    <property type="project" value="UniProtKB-UniRule"/>
</dbReference>
<dbReference type="GO" id="GO:0006777">
    <property type="term" value="P:Mo-molybdopterin cofactor biosynthetic process"/>
    <property type="evidence" value="ECO:0007669"/>
    <property type="project" value="UniProtKB-UniRule"/>
</dbReference>
<dbReference type="Gene3D" id="3.30.70.640">
    <property type="entry name" value="Molybdopterin cofactor biosynthesis C (MoaC) domain"/>
    <property type="match status" value="1"/>
</dbReference>
<dbReference type="HAMAP" id="MF_01224_A">
    <property type="entry name" value="MoaC_A"/>
    <property type="match status" value="1"/>
</dbReference>
<dbReference type="InterPro" id="IPR023047">
    <property type="entry name" value="Mo_CF_biosynth-C_arc"/>
</dbReference>
<dbReference type="InterPro" id="IPR023045">
    <property type="entry name" value="MoaC"/>
</dbReference>
<dbReference type="InterPro" id="IPR036522">
    <property type="entry name" value="MoaC_sf"/>
</dbReference>
<dbReference type="InterPro" id="IPR002820">
    <property type="entry name" value="Mopterin_CF_biosynth-C_dom"/>
</dbReference>
<dbReference type="NCBIfam" id="TIGR00581">
    <property type="entry name" value="moaC"/>
    <property type="match status" value="1"/>
</dbReference>
<dbReference type="NCBIfam" id="NF008999">
    <property type="entry name" value="PRK12343.1"/>
    <property type="match status" value="1"/>
</dbReference>
<dbReference type="Pfam" id="PF01967">
    <property type="entry name" value="MoaC"/>
    <property type="match status" value="1"/>
</dbReference>
<dbReference type="SUPFAM" id="SSF55040">
    <property type="entry name" value="Molybdenum cofactor biosynthesis protein C, MoaC"/>
    <property type="match status" value="1"/>
</dbReference>
<reference key="1">
    <citation type="journal article" date="1999" name="DNA Res.">
        <title>Complete genome sequence of an aerobic hyper-thermophilic crenarchaeon, Aeropyrum pernix K1.</title>
        <authorList>
            <person name="Kawarabayasi Y."/>
            <person name="Hino Y."/>
            <person name="Horikawa H."/>
            <person name="Yamazaki S."/>
            <person name="Haikawa Y."/>
            <person name="Jin-no K."/>
            <person name="Takahashi M."/>
            <person name="Sekine M."/>
            <person name="Baba S."/>
            <person name="Ankai A."/>
            <person name="Kosugi H."/>
            <person name="Hosoyama A."/>
            <person name="Fukui S."/>
            <person name="Nagai Y."/>
            <person name="Nishijima K."/>
            <person name="Nakazawa H."/>
            <person name="Takamiya M."/>
            <person name="Masuda S."/>
            <person name="Funahashi T."/>
            <person name="Tanaka T."/>
            <person name="Kudoh Y."/>
            <person name="Yamazaki J."/>
            <person name="Kushida N."/>
            <person name="Oguchi A."/>
            <person name="Aoki K."/>
            <person name="Kubota K."/>
            <person name="Nakamura Y."/>
            <person name="Nomura N."/>
            <person name="Sako Y."/>
            <person name="Kikuchi H."/>
        </authorList>
    </citation>
    <scope>NUCLEOTIDE SEQUENCE [LARGE SCALE GENOMIC DNA]</scope>
    <source>
        <strain>ATCC 700893 / DSM 11879 / JCM 9820 / NBRC 100138 / K1</strain>
    </source>
</reference>
<accession>Q9YCA4</accession>
<sequence length="146" mass="15687">MSGAGMVDITAKEPVRREAVASGFISLKRETVKAIREGRVEKGDVISVASVAAVLAVKETPRLIPLTHPIPIEKVEPEVRVRDDGVEVRVRVATTAKTGVEMEALAGVTAALLTVWDMVKSLEKDETGNYPDTVITGVKVEVKRKG</sequence>